<organism>
    <name type="scientific">Yersinia pestis bv. Antiqua (strain Antiqua)</name>
    <dbReference type="NCBI Taxonomy" id="360102"/>
    <lineage>
        <taxon>Bacteria</taxon>
        <taxon>Pseudomonadati</taxon>
        <taxon>Pseudomonadota</taxon>
        <taxon>Gammaproteobacteria</taxon>
        <taxon>Enterobacterales</taxon>
        <taxon>Yersiniaceae</taxon>
        <taxon>Yersinia</taxon>
    </lineage>
</organism>
<feature type="chain" id="PRO_1000025682" description="Protein Smg">
    <location>
        <begin position="1"/>
        <end position="157"/>
    </location>
</feature>
<sequence>MFDVLIYLFETYMHNEPEMLVDQDKITDDLADAGFYREDINNALNWLEVLADLQEGQKAPYLYTADPQALRIYTVEECRRLGAACRGFILFLEQIQVLQFDTREMVIDRIMALDSPEIDLEDLKWVVLMVLFNIPGYENAYKQMEELLFEVNDGYLH</sequence>
<proteinExistence type="inferred from homology"/>
<dbReference type="EMBL" id="CP000308">
    <property type="protein sequence ID" value="ABG15191.1"/>
    <property type="molecule type" value="Genomic_DNA"/>
</dbReference>
<dbReference type="RefSeq" id="WP_002209023.1">
    <property type="nucleotide sequence ID" value="NZ_CP009906.1"/>
</dbReference>
<dbReference type="SMR" id="Q1C2Y1"/>
<dbReference type="KEGG" id="ypa:YPA_3229"/>
<dbReference type="Proteomes" id="UP000001971">
    <property type="component" value="Chromosome"/>
</dbReference>
<dbReference type="HAMAP" id="MF_00598">
    <property type="entry name" value="Smg"/>
    <property type="match status" value="1"/>
</dbReference>
<dbReference type="InterPro" id="IPR007456">
    <property type="entry name" value="Smg"/>
</dbReference>
<dbReference type="NCBIfam" id="NF002897">
    <property type="entry name" value="PRK03430.1"/>
    <property type="match status" value="1"/>
</dbReference>
<dbReference type="PANTHER" id="PTHR38692">
    <property type="entry name" value="PROTEIN SMG"/>
    <property type="match status" value="1"/>
</dbReference>
<dbReference type="PANTHER" id="PTHR38692:SF1">
    <property type="entry name" value="PROTEIN SMG"/>
    <property type="match status" value="1"/>
</dbReference>
<dbReference type="Pfam" id="PF04361">
    <property type="entry name" value="DUF494"/>
    <property type="match status" value="1"/>
</dbReference>
<reference key="1">
    <citation type="journal article" date="2006" name="J. Bacteriol.">
        <title>Complete genome sequence of Yersinia pestis strains Antiqua and Nepal516: evidence of gene reduction in an emerging pathogen.</title>
        <authorList>
            <person name="Chain P.S.G."/>
            <person name="Hu P."/>
            <person name="Malfatti S.A."/>
            <person name="Radnedge L."/>
            <person name="Larimer F."/>
            <person name="Vergez L.M."/>
            <person name="Worsham P."/>
            <person name="Chu M.C."/>
            <person name="Andersen G.L."/>
        </authorList>
    </citation>
    <scope>NUCLEOTIDE SEQUENCE [LARGE SCALE GENOMIC DNA]</scope>
    <source>
        <strain>Antiqua</strain>
    </source>
</reference>
<comment type="similarity">
    <text evidence="1">Belongs to the Smg family.</text>
</comment>
<accession>Q1C2Y1</accession>
<protein>
    <recommendedName>
        <fullName evidence="1">Protein Smg</fullName>
    </recommendedName>
</protein>
<name>SMG_YERPA</name>
<gene>
    <name evidence="1" type="primary">smg</name>
    <name type="ordered locus">YPA_3229</name>
</gene>
<evidence type="ECO:0000255" key="1">
    <source>
        <dbReference type="HAMAP-Rule" id="MF_00598"/>
    </source>
</evidence>